<dbReference type="EMBL" id="BC102896">
    <property type="protein sequence ID" value="AAI02897.1"/>
    <property type="molecule type" value="mRNA"/>
</dbReference>
<dbReference type="RefSeq" id="NP_001029625.1">
    <property type="nucleotide sequence ID" value="NM_001034453.2"/>
</dbReference>
<dbReference type="SMR" id="Q3ZC62"/>
<dbReference type="FunCoup" id="Q3ZC62">
    <property type="interactions" value="136"/>
</dbReference>
<dbReference type="STRING" id="9913.ENSBTAP00000061075"/>
<dbReference type="PaxDb" id="9913-ENSBTAP00000000705"/>
<dbReference type="GeneID" id="513777"/>
<dbReference type="KEGG" id="bta:513777"/>
<dbReference type="CTD" id="112942"/>
<dbReference type="eggNOG" id="KOG4511">
    <property type="taxonomic scope" value="Eukaryota"/>
</dbReference>
<dbReference type="HOGENOM" id="CLU_050059_0_0_1"/>
<dbReference type="InParanoid" id="Q3ZC62"/>
<dbReference type="OrthoDB" id="272687at2759"/>
<dbReference type="TreeFam" id="TF315143"/>
<dbReference type="Proteomes" id="UP000009136">
    <property type="component" value="Unplaced"/>
</dbReference>
<dbReference type="GO" id="GO:0005930">
    <property type="term" value="C:axoneme"/>
    <property type="evidence" value="ECO:0000318"/>
    <property type="project" value="GO_Central"/>
</dbReference>
<dbReference type="GO" id="GO:0097546">
    <property type="term" value="C:ciliary base"/>
    <property type="evidence" value="ECO:0000318"/>
    <property type="project" value="GO_Central"/>
</dbReference>
<dbReference type="GO" id="GO:0031514">
    <property type="term" value="C:motile cilium"/>
    <property type="evidence" value="ECO:0007669"/>
    <property type="project" value="UniProtKB-SubCell"/>
</dbReference>
<dbReference type="GO" id="GO:0005634">
    <property type="term" value="C:nucleus"/>
    <property type="evidence" value="ECO:0007669"/>
    <property type="project" value="UniProtKB-SubCell"/>
</dbReference>
<dbReference type="FunFam" id="1.20.1520.10:FF:000001">
    <property type="entry name" value="Cilia- and flagella-associated protein 36"/>
    <property type="match status" value="1"/>
</dbReference>
<dbReference type="Gene3D" id="1.20.1520.10">
    <property type="entry name" value="ADP-ribosylation factor-like 2-binding protein, domain"/>
    <property type="match status" value="1"/>
</dbReference>
<dbReference type="InterPro" id="IPR023379">
    <property type="entry name" value="BART_dom"/>
</dbReference>
<dbReference type="InterPro" id="IPR042541">
    <property type="entry name" value="BART_sf"/>
</dbReference>
<dbReference type="InterPro" id="IPR038888">
    <property type="entry name" value="CFAP36"/>
</dbReference>
<dbReference type="PANTHER" id="PTHR21532:SF0">
    <property type="entry name" value="CILIA- AND FLAGELLA-ASSOCIATED PROTEIN 36"/>
    <property type="match status" value="1"/>
</dbReference>
<dbReference type="PANTHER" id="PTHR21532">
    <property type="entry name" value="PHOSPHODIESTERASE HL"/>
    <property type="match status" value="1"/>
</dbReference>
<dbReference type="Pfam" id="PF11527">
    <property type="entry name" value="ARL2_Bind_BART"/>
    <property type="match status" value="1"/>
</dbReference>
<reference key="1">
    <citation type="submission" date="2005-08" db="EMBL/GenBank/DDBJ databases">
        <authorList>
            <consortium name="NIH - Mammalian Gene Collection (MGC) project"/>
        </authorList>
    </citation>
    <scope>NUCLEOTIDE SEQUENCE [LARGE SCALE MRNA]</scope>
    <source>
        <strain>Hereford</strain>
        <tissue>Hypothalamus</tissue>
    </source>
</reference>
<protein>
    <recommendedName>
        <fullName evidence="6">Cilia- and flagella-associated protein 36</fullName>
    </recommendedName>
    <alternativeName>
        <fullName evidence="6">Coiled-coil domain-containing protein 104</fullName>
    </alternativeName>
</protein>
<organism>
    <name type="scientific">Bos taurus</name>
    <name type="common">Bovine</name>
    <dbReference type="NCBI Taxonomy" id="9913"/>
    <lineage>
        <taxon>Eukaryota</taxon>
        <taxon>Metazoa</taxon>
        <taxon>Chordata</taxon>
        <taxon>Craniata</taxon>
        <taxon>Vertebrata</taxon>
        <taxon>Euteleostomi</taxon>
        <taxon>Mammalia</taxon>
        <taxon>Eutheria</taxon>
        <taxon>Laurasiatheria</taxon>
        <taxon>Artiodactyla</taxon>
        <taxon>Ruminantia</taxon>
        <taxon>Pecora</taxon>
        <taxon>Bovidae</taxon>
        <taxon>Bovinae</taxon>
        <taxon>Bos</taxon>
    </lineage>
</organism>
<sequence length="313" mass="36208">MAAEEEDEVEWVVESIAGFLRGPDWSIPILDFVEQKCEVFDDEEESKLTYTEIHQEYKELVEKLLETYLKEIGINEDQFQEACTSPLAKTRTSQAILQPVLAAEDFTIFKAMMVEKNTEMQLQAIRIIQERNGVLPDCLTDGSDVVSDLEQEEMKILKEVLRKSKEEYDQEEERKRKKQLSEAKTEEHPMQANETAKMSNSQGDGEHFAHPASGLKIPGFEHASMEGPIANLSTLRTEELRQREHYLKQKRDKLMSMRKDMKIKQNQTSEQKGKPAGEVEEMTEKPEMTAEEKQTLLKRRLLAEKLKEEVINK</sequence>
<feature type="chain" id="PRO_0000278641" description="Cilia- and flagella-associated protein 36">
    <location>
        <begin position="1"/>
        <end position="313"/>
    </location>
</feature>
<feature type="region of interest" description="Disordered" evidence="5">
    <location>
        <begin position="165"/>
        <end position="204"/>
    </location>
</feature>
<feature type="region of interest" description="Disordered" evidence="5">
    <location>
        <begin position="262"/>
        <end position="292"/>
    </location>
</feature>
<feature type="coiled-coil region" evidence="4">
    <location>
        <begin position="147"/>
        <end position="187"/>
    </location>
</feature>
<feature type="compositionally biased region" description="Basic and acidic residues" evidence="5">
    <location>
        <begin position="179"/>
        <end position="189"/>
    </location>
</feature>
<feature type="compositionally biased region" description="Polar residues" evidence="5">
    <location>
        <begin position="192"/>
        <end position="203"/>
    </location>
</feature>
<feature type="compositionally biased region" description="Basic and acidic residues" evidence="5">
    <location>
        <begin position="271"/>
        <end position="292"/>
    </location>
</feature>
<feature type="modified residue" description="Phosphoserine" evidence="2">
    <location>
        <position position="85"/>
    </location>
</feature>
<feature type="modified residue" description="Phosphoserine" evidence="2">
    <location>
        <position position="147"/>
    </location>
</feature>
<feature type="modified residue" description="Phosphoserine" evidence="2">
    <location>
        <position position="201"/>
    </location>
</feature>
<proteinExistence type="evidence at transcript level"/>
<keyword id="KW-0966">Cell projection</keyword>
<keyword id="KW-0969">Cilium</keyword>
<keyword id="KW-0175">Coiled coil</keyword>
<keyword id="KW-0963">Cytoplasm</keyword>
<keyword id="KW-0282">Flagellum</keyword>
<keyword id="KW-0539">Nucleus</keyword>
<keyword id="KW-0597">Phosphoprotein</keyword>
<keyword id="KW-1185">Reference proteome</keyword>
<evidence type="ECO:0000250" key="1"/>
<evidence type="ECO:0000250" key="2">
    <source>
        <dbReference type="UniProtKB" id="Q8C6E0"/>
    </source>
</evidence>
<evidence type="ECO:0000250" key="3">
    <source>
        <dbReference type="UniProtKB" id="Q96G28"/>
    </source>
</evidence>
<evidence type="ECO:0000255" key="4"/>
<evidence type="ECO:0000256" key="5">
    <source>
        <dbReference type="SAM" id="MobiDB-lite"/>
    </source>
</evidence>
<evidence type="ECO:0000305" key="6"/>
<accession>Q3ZC62</accession>
<comment type="function">
    <text evidence="1">May act as an effector for ARL3.</text>
</comment>
<comment type="subunit">
    <text evidence="1">Interacts with ARL3.</text>
</comment>
<comment type="subcellular location">
    <subcellularLocation>
        <location evidence="3">Nucleus</location>
    </subcellularLocation>
    <subcellularLocation>
        <location evidence="3">Cytoplasm</location>
    </subcellularLocation>
    <subcellularLocation>
        <location evidence="6">Cell projection</location>
        <location evidence="6">Cilium</location>
        <location evidence="6">Flagellum</location>
    </subcellularLocation>
</comment>
<comment type="similarity">
    <text evidence="6">Belongs to the CFAP36 family.</text>
</comment>
<name>CFA36_BOVIN</name>
<gene>
    <name evidence="6" type="primary">CFAP36</name>
    <name evidence="6" type="synonym">CCDC104</name>
</gene>